<protein>
    <recommendedName>
        <fullName>Cortactin-binding protein 2</fullName>
        <shortName>CortBP2</shortName>
    </recommendedName>
</protein>
<feature type="chain" id="PRO_0000422172" description="Cortactin-binding protein 2">
    <location>
        <begin position="1"/>
        <end position="1648"/>
    </location>
</feature>
<feature type="repeat" description="ANK 1">
    <location>
        <begin position="699"/>
        <end position="729"/>
    </location>
</feature>
<feature type="repeat" description="ANK 2">
    <location>
        <begin position="733"/>
        <end position="762"/>
    </location>
</feature>
<feature type="repeat" description="ANK 3">
    <location>
        <begin position="766"/>
        <end position="795"/>
    </location>
</feature>
<feature type="repeat" description="ANK 4">
    <location>
        <begin position="799"/>
        <end position="828"/>
    </location>
</feature>
<feature type="repeat" description="ANK 5">
    <location>
        <begin position="832"/>
        <end position="861"/>
    </location>
</feature>
<feature type="repeat" description="ANK 6">
    <location>
        <begin position="901"/>
        <end position="931"/>
    </location>
</feature>
<feature type="region of interest" description="Disordered" evidence="3">
    <location>
        <begin position="1"/>
        <end position="26"/>
    </location>
</feature>
<feature type="region of interest" description="Disordered" evidence="3">
    <location>
        <begin position="200"/>
        <end position="250"/>
    </location>
</feature>
<feature type="region of interest" description="Disordered" evidence="3">
    <location>
        <begin position="322"/>
        <end position="439"/>
    </location>
</feature>
<feature type="region of interest" description="Disordered" evidence="3">
    <location>
        <begin position="451"/>
        <end position="476"/>
    </location>
</feature>
<feature type="region of interest" description="Disordered" evidence="3">
    <location>
        <begin position="492"/>
        <end position="608"/>
    </location>
</feature>
<feature type="region of interest" description="Disordered" evidence="3">
    <location>
        <begin position="1438"/>
        <end position="1492"/>
    </location>
</feature>
<feature type="region of interest" description="Disordered" evidence="3">
    <location>
        <begin position="1522"/>
        <end position="1648"/>
    </location>
</feature>
<feature type="coiled-coil region" evidence="2">
    <location>
        <begin position="119"/>
        <end position="274"/>
    </location>
</feature>
<feature type="compositionally biased region" description="Basic and acidic residues" evidence="3">
    <location>
        <begin position="200"/>
        <end position="218"/>
    </location>
</feature>
<feature type="compositionally biased region" description="Basic and acidic residues" evidence="3">
    <location>
        <begin position="225"/>
        <end position="250"/>
    </location>
</feature>
<feature type="compositionally biased region" description="Polar residues" evidence="3">
    <location>
        <begin position="330"/>
        <end position="342"/>
    </location>
</feature>
<feature type="compositionally biased region" description="Polar residues" evidence="3">
    <location>
        <begin position="372"/>
        <end position="392"/>
    </location>
</feature>
<feature type="compositionally biased region" description="Low complexity" evidence="3">
    <location>
        <begin position="393"/>
        <end position="415"/>
    </location>
</feature>
<feature type="compositionally biased region" description="Polar residues" evidence="3">
    <location>
        <begin position="492"/>
        <end position="503"/>
    </location>
</feature>
<feature type="compositionally biased region" description="Polar residues" evidence="3">
    <location>
        <begin position="1477"/>
        <end position="1492"/>
    </location>
</feature>
<feature type="compositionally biased region" description="Basic and acidic residues" evidence="3">
    <location>
        <begin position="1528"/>
        <end position="1547"/>
    </location>
</feature>
<feature type="compositionally biased region" description="Polar residues" evidence="3">
    <location>
        <begin position="1548"/>
        <end position="1557"/>
    </location>
</feature>
<feature type="compositionally biased region" description="Polar residues" evidence="3">
    <location>
        <begin position="1571"/>
        <end position="1584"/>
    </location>
</feature>
<feature type="compositionally biased region" description="Low complexity" evidence="3">
    <location>
        <begin position="1609"/>
        <end position="1623"/>
    </location>
</feature>
<feature type="compositionally biased region" description="Basic and acidic residues" evidence="3">
    <location>
        <begin position="1630"/>
        <end position="1648"/>
    </location>
</feature>
<feature type="modified residue" description="Asymmetric dimethylarginine" evidence="11">
    <location>
        <position position="495"/>
    </location>
</feature>
<feature type="modified residue" description="Phosphoserine" evidence="10">
    <location>
        <position position="1510"/>
    </location>
</feature>
<feature type="splice variant" id="VSP_046473" description="In isoform 5." evidence="8">
    <original>VGAWPAGTPGLNQPACSDSSLVIPATVAFCSSINPVSASSRSPGASDSLLVAASG</original>
    <variation>KIQKVKCTREEPSC</variation>
    <location>
        <begin position="626"/>
        <end position="680"/>
    </location>
</feature>
<feature type="splice variant" id="VSP_046474" description="In isoform 2." evidence="7">
    <original>VGAWP</original>
    <variation>AGHPP</variation>
    <location>
        <begin position="626"/>
        <end position="630"/>
    </location>
</feature>
<feature type="splice variant" id="VSP_046475" description="In isoform 2." evidence="7">
    <location>
        <begin position="631"/>
        <end position="1648"/>
    </location>
</feature>
<feature type="splice variant" id="VSP_046476" description="In isoform 3." evidence="8">
    <original>WSPSLTPLLMSGGPAPLAGRPTLLQQAAAQ</original>
    <variation>KGIEVFYPFVKNVPYSLTSLNFFYVVLKRF</variation>
    <location>
        <begin position="681"/>
        <end position="710"/>
    </location>
</feature>
<feature type="splice variant" id="VSP_046477" description="In isoform 3." evidence="8">
    <location>
        <begin position="711"/>
        <end position="1648"/>
    </location>
</feature>
<feature type="splice variant" id="VSP_046478" description="In isoform 4." evidence="6">
    <original>EASPPSSRQTAECSNSKSKTEMGVSSVKSFLPVPRSKVAQCSQNTKRNSSSSNTRQLEINNNSKEENWTLDKHEQVEKPNK</original>
    <variation>KQSRSVFPEHQKKQQQQQYKATRNQQQLQRRELDLRQTRTSRKTKQIGLPTPPTTT</variation>
    <location>
        <begin position="1568"/>
        <end position="1648"/>
    </location>
</feature>
<feature type="mutagenesis site" description="Almost complete loss of CTTN-binding and loss of regulation of spine density; when associated with A-543." evidence="4">
    <original>P</original>
    <variation>A</variation>
    <location>
        <position position="540"/>
    </location>
</feature>
<feature type="mutagenesis site" description="Almost complete loss of CTTN-binding and loss of regulation of spine density; when associated with A-540." evidence="4">
    <original>P</original>
    <variation>A</variation>
    <location>
        <position position="543"/>
    </location>
</feature>
<feature type="mutagenesis site" description="Reduced CTTN-binding; when associated with A-602." evidence="4">
    <original>P</original>
    <variation>A</variation>
    <location>
        <position position="599"/>
    </location>
</feature>
<feature type="mutagenesis site" description="Reduced CTTN-binding; when associated with A-599." evidence="4">
    <original>P</original>
    <variation>A</variation>
    <location>
        <position position="602"/>
    </location>
</feature>
<feature type="sequence conflict" description="In Ref. 1; AK028980." evidence="9" ref="1">
    <original>V</original>
    <variation>F</variation>
    <location>
        <position position="521"/>
    </location>
</feature>
<feature type="sequence conflict" description="In Ref. 1; AK028980." evidence="9" ref="1">
    <original>V</original>
    <variation>F</variation>
    <location>
        <position position="661"/>
    </location>
</feature>
<feature type="sequence conflict" description="In Ref. 4; AAI41408." evidence="9" ref="4">
    <original>S</original>
    <variation>SSS</variation>
    <location>
        <position position="1619"/>
    </location>
</feature>
<proteinExistence type="evidence at protein level"/>
<accession>B9EJA2</accession>
<accession>G3X9L7</accession>
<accession>Q69ZB2</accession>
<accession>Q8BVG1</accession>
<accession>Q8C044</accession>
<comment type="function">
    <text evidence="4 5">Regulates the dendritic spine distribution of CTTN/cortactin in hippocampal neurons, and thus controls dendritic spinogenesis and dendritic spine maintenance (PubMed:22262902). Associates with the striatin-interacting phosphatase and kinase (STRIPAK) core complex to regulate dendritic spine distribution of the STRIPAK complex in hippocampal neurons (PubMed:23015759).</text>
</comment>
<comment type="subunit">
    <text evidence="1 4">Interacts with CTTN/cortactin SH3 domain (PubMed:22262902). Interacts with STRN, STRN4/zinedin and MOB4/phocein; this interactions mediate the association with the STRIPAK core complex and may regulate dendritic spine distribution of the STRIPAK complex in hippocampal neurons. Activation of glutamate receptors weakens the interaction with STRN and STRN4 (By similarity).</text>
</comment>
<comment type="subcellular location">
    <subcellularLocation>
        <location evidence="4 5">Cytoplasm</location>
        <location evidence="4 5">Cell cortex</location>
    </subcellularLocation>
    <subcellularLocation>
        <location evidence="4 5">Cell projection</location>
        <location evidence="4 5">Dendritic spine</location>
    </subcellularLocation>
    <text evidence="4 5">Remains associated with dendritic spines even after glutamate stimulation.</text>
</comment>
<comment type="alternative products">
    <event type="alternative splicing"/>
    <isoform>
        <id>B9EJA2-1</id>
        <name>1</name>
        <name>CTTNBP2-L</name>
        <sequence type="displayed"/>
    </isoform>
    <isoform>
        <id>B9EJA2-2</id>
        <name>2</name>
        <name>CTTNBP2-S</name>
        <sequence type="described" ref="VSP_046474 VSP_046475"/>
    </isoform>
    <isoform>
        <id>B9EJA2-3</id>
        <name>3</name>
        <name>CTTNBP2-intron</name>
        <sequence type="described" ref="VSP_046476 VSP_046477"/>
    </isoform>
    <isoform>
        <id>B9EJA2-4</id>
        <name>4</name>
        <sequence type="described" ref="VSP_046478"/>
    </isoform>
    <isoform>
        <id>B9EJA2-5</id>
        <name>5</name>
        <sequence type="described" ref="VSP_046473"/>
    </isoform>
</comment>
<comment type="tissue specificity">
    <text evidence="4 5">Isoform 2 is predominantly expressed in brain (at protein level). In the brain, expressed at high levels in hypothalamus and striatum and at lower levels in cerebellum and cortex.</text>
</comment>
<comment type="miscellaneous">
    <molecule>Isoform 2</molecule>
    <text evidence="9">May be produced at very low levels due to a premature stop codon in the mRNA, leading to nonsense-mediated mRNA decay.</text>
</comment>
<comment type="miscellaneous">
    <molecule>Isoform 3</molecule>
    <text evidence="9">Due to intron retention.</text>
</comment>
<comment type="miscellaneous">
    <molecule>Isoform 4</molecule>
    <text evidence="9">May be due to competing acceptor splice site.</text>
</comment>
<comment type="sequence caution" evidence="9">
    <conflict type="miscellaneous discrepancy">
        <sequence resource="EMBL-CDS" id="BAD32532"/>
    </conflict>
    <text>Erroneous CDS prediction and frameshift.</text>
</comment>
<keyword id="KW-0025">Alternative splicing</keyword>
<keyword id="KW-0040">ANK repeat</keyword>
<keyword id="KW-0966">Cell projection</keyword>
<keyword id="KW-0175">Coiled coil</keyword>
<keyword id="KW-0963">Cytoplasm</keyword>
<keyword id="KW-0488">Methylation</keyword>
<keyword id="KW-0597">Phosphoprotein</keyword>
<keyword id="KW-1185">Reference proteome</keyword>
<keyword id="KW-0677">Repeat</keyword>
<keyword id="KW-0770">Synapse</keyword>
<sequence>MATDSASCEPDLSRTPGDTEGATAEAAKKEFDVDTLSKSELRMLLSVMEGELEARDLVIEALRARRKEVFIQERYGRFNLNDPFLALQRDYEAGPGDKEKPVCTNPLSILEAVMAHCRKMQERMSAQLVAAESRQKKLEMEKLQLQALEQEHKKLAAHLEEERGKNKHVVLMLVKECKQLSGKVVEEAQKLEEVMAQLEEEKKKTSELEEQLSAEKQRSSGMEAQLEKQLSEFDTEREQLRAKLSREEAHTTDLKEEIDKMKKMMEQMKKGSDGKPGLSLPRKTKDKRLASISVATEGPVTRSVACQTDVVTESTDPVKKLPLTVPIKPSTGSPLVPTNTKGNVGPSALLIRPGIDRQSSHSDLGPSPPTALPSSANRIEENGPSTGNAPDLSNSTPSTPSSTAPAAAQTPGTAPQNHSQAPTVHSLHSPCANTHPGLNPRIQAARFRFQGNANDPDQNGNNTQSPPSRDVSPTSRDNLVAKQLARNTVTQALSRFTSPQAGASSRLGVSPGGDAGTCPPVGRTGLKTPGAARVDRGNPPPIPPKKPGLSQTPSPPHPQLRASNAGAKVDNKIVASPPSTLPQGTKVVNEENVPKSSSPQLPPKPSIDLTVAPAGCPVSALATSQVGAWPAGTPGLNQPACSDSSLVIPATVAFCSSINPVSASSRSPGASDSLLVAASGWSPSLTPLLMSGGPAPLAGRPTLLQQAAAQGNVTLLSMLLNEEGLDINYSCEDGHSALYSAAKNGHTDCVRLLLNAEARVDAADKNGFTPLCVAAAQGHFECIELLTAYNANINHSAAGGQTPLYLACKNGNKECIKLLLEAGTDRSIKTRDGWTPIHAAVDTGNVDSLKLLMYHRVRAHGNSLSSEEPKSGLFSLNGGESPTGPSKPVVPADLINHADKEGWTAAHIAASKGFKNCLEVLCRHGGLEPERRDKCNRTVHDVATDDCKHLLENLNALKIPLRISVGEIQPSNDVSDDFECEHTICTLNIRKQTSWEDFSKAVSQALTNHFQAISSDGWWSLEDGTFNNATDSCIGLGTSSIRSIMLGSMPWSTGQSFSQSPWDFLKKKKVEQVLALLSGPQEGCLSSVTYASMIPLQMLQNYLRLVEQYHNVIFHGPEGSLQDYIANQLALCMKYRQMAAGFPCEIVRAEVDSGFSKEQLVDVFIRNACLIPVKQFPVKKKIIVILENLEKSSLSELLGDFLAPLENRSTESPCTFQKGNGTSECYYFHENCFLVGTIAKACLQGSDLLVQQHFRWVQLRWDCEPIQGLLQRFLRRKVVSKFRGQLPAPCDPVCKIVDWALSVWRQLNSCLARLGTPEALLGPKYFLSCPVVPGHAQATVKWMSKLWNAVIAPRVQEAILSRASMNKQPGTGQTASKKYPSQGQQAVVRAALSILLNKAVLHGCPLPRAELDQQIADFKGGSFPLSIVSSYSKKKVESGAWRKVNTSPRKKPGHFSSPTWNKPDPKREGMRNKTIPHLNTNRNSSLSKQQSLENDLSVTLTLDHRLSLGSDDEADLVKELQSMCSSKSESDISKIADSRDDLRKFDSSRTNPGTSAPLNLRTPVPQKEASPPSSRQTAECSNSKSKTEMGVSSVKSFLPVPRSKVAQCSQNTKRNSSSSNTRQLEINNNSKEENWTLDKHEQVEKPNK</sequence>
<organism>
    <name type="scientific">Mus musculus</name>
    <name type="common">Mouse</name>
    <dbReference type="NCBI Taxonomy" id="10090"/>
    <lineage>
        <taxon>Eukaryota</taxon>
        <taxon>Metazoa</taxon>
        <taxon>Chordata</taxon>
        <taxon>Craniata</taxon>
        <taxon>Vertebrata</taxon>
        <taxon>Euteleostomi</taxon>
        <taxon>Mammalia</taxon>
        <taxon>Eutheria</taxon>
        <taxon>Euarchontoglires</taxon>
        <taxon>Glires</taxon>
        <taxon>Rodentia</taxon>
        <taxon>Myomorpha</taxon>
        <taxon>Muroidea</taxon>
        <taxon>Muridae</taxon>
        <taxon>Murinae</taxon>
        <taxon>Mus</taxon>
        <taxon>Mus</taxon>
    </lineage>
</organism>
<gene>
    <name type="primary">Cttnbp2</name>
    <name type="synonym">Kiaa1758</name>
</gene>
<dbReference type="EMBL" id="AK028980">
    <property type="status" value="NOT_ANNOTATED_CDS"/>
    <property type="molecule type" value="mRNA"/>
</dbReference>
<dbReference type="EMBL" id="AK032356">
    <property type="protein sequence ID" value="BAC27832.1"/>
    <property type="molecule type" value="mRNA"/>
</dbReference>
<dbReference type="EMBL" id="AK078315">
    <property type="protein sequence ID" value="BAC37216.1"/>
    <property type="molecule type" value="mRNA"/>
</dbReference>
<dbReference type="EMBL" id="AC027654">
    <property type="status" value="NOT_ANNOTATED_CDS"/>
    <property type="molecule type" value="Genomic_DNA"/>
</dbReference>
<dbReference type="EMBL" id="AC158663">
    <property type="status" value="NOT_ANNOTATED_CDS"/>
    <property type="molecule type" value="Genomic_DNA"/>
</dbReference>
<dbReference type="EMBL" id="CH466533">
    <property type="protein sequence ID" value="EDL13863.1"/>
    <property type="molecule type" value="Genomic_DNA"/>
</dbReference>
<dbReference type="EMBL" id="BC068156">
    <property type="status" value="NOT_ANNOTATED_CDS"/>
    <property type="molecule type" value="mRNA"/>
</dbReference>
<dbReference type="EMBL" id="BQ769661">
    <property type="status" value="NOT_ANNOTATED_CDS"/>
    <property type="molecule type" value="mRNA"/>
</dbReference>
<dbReference type="EMBL" id="BC141407">
    <property type="protein sequence ID" value="AAI41408.1"/>
    <property type="molecule type" value="mRNA"/>
</dbReference>
<dbReference type="EMBL" id="CB526439">
    <property type="status" value="NOT_ANNOTATED_CDS"/>
    <property type="molecule type" value="mRNA"/>
</dbReference>
<dbReference type="EMBL" id="AK173254">
    <property type="protein sequence ID" value="BAD32532.1"/>
    <property type="status" value="ALT_SEQ"/>
    <property type="molecule type" value="mRNA"/>
</dbReference>
<dbReference type="CCDS" id="CCDS39432.1">
    <molecule id="B9EJA2-1"/>
</dbReference>
<dbReference type="RefSeq" id="NP_525024.1">
    <molecule id="B9EJA2-1"/>
    <property type="nucleotide sequence ID" value="NM_080285.2"/>
</dbReference>
<dbReference type="RefSeq" id="XP_006505167.1">
    <molecule id="B9EJA2-5"/>
    <property type="nucleotide sequence ID" value="XM_006505104.3"/>
</dbReference>
<dbReference type="SMR" id="B9EJA2"/>
<dbReference type="BioGRID" id="205963">
    <property type="interactions" value="28"/>
</dbReference>
<dbReference type="FunCoup" id="B9EJA2">
    <property type="interactions" value="434"/>
</dbReference>
<dbReference type="IntAct" id="B9EJA2">
    <property type="interactions" value="7"/>
</dbReference>
<dbReference type="MINT" id="B9EJA2"/>
<dbReference type="STRING" id="10090.ENSMUSP00000088089"/>
<dbReference type="GlyGen" id="B9EJA2">
    <property type="glycosylation" value="8 sites, 2 N-linked glycans (2 sites), 1 O-linked glycan (3 sites)"/>
</dbReference>
<dbReference type="iPTMnet" id="B9EJA2"/>
<dbReference type="PhosphoSitePlus" id="B9EJA2"/>
<dbReference type="SwissPalm" id="B9EJA2"/>
<dbReference type="PaxDb" id="10090-ENSMUSP00000088089"/>
<dbReference type="PeptideAtlas" id="B9EJA2"/>
<dbReference type="ProteomicsDB" id="279291">
    <molecule id="B9EJA2-1"/>
</dbReference>
<dbReference type="ProteomicsDB" id="279292">
    <molecule id="B9EJA2-2"/>
</dbReference>
<dbReference type="ProteomicsDB" id="279293">
    <molecule id="B9EJA2-3"/>
</dbReference>
<dbReference type="ProteomicsDB" id="279294">
    <molecule id="B9EJA2-4"/>
</dbReference>
<dbReference type="ProteomicsDB" id="279295">
    <molecule id="B9EJA2-5"/>
</dbReference>
<dbReference type="Antibodypedia" id="3970">
    <property type="antibodies" value="89 antibodies from 18 providers"/>
</dbReference>
<dbReference type="Ensembl" id="ENSMUST00000090601.12">
    <molecule id="B9EJA2-1"/>
    <property type="protein sequence ID" value="ENSMUSP00000088089.6"/>
    <property type="gene ID" value="ENSMUSG00000000416.17"/>
</dbReference>
<dbReference type="Ensembl" id="ENSMUST00000148602.8">
    <molecule id="B9EJA2-2"/>
    <property type="protein sequence ID" value="ENSMUSP00000118432.2"/>
    <property type="gene ID" value="ENSMUSG00000000416.17"/>
</dbReference>
<dbReference type="GeneID" id="30785"/>
<dbReference type="KEGG" id="mmu:30785"/>
<dbReference type="UCSC" id="uc009bak.1">
    <molecule id="B9EJA2-1"/>
    <property type="organism name" value="mouse"/>
</dbReference>
<dbReference type="UCSC" id="uc009ban.1">
    <molecule id="B9EJA2-3"/>
    <property type="organism name" value="mouse"/>
</dbReference>
<dbReference type="AGR" id="MGI:1353467"/>
<dbReference type="CTD" id="83992"/>
<dbReference type="MGI" id="MGI:1353467">
    <property type="gene designation" value="Cttnbp2"/>
</dbReference>
<dbReference type="VEuPathDB" id="HostDB:ENSMUSG00000000416"/>
<dbReference type="eggNOG" id="ENOG502QWG2">
    <property type="taxonomic scope" value="Eukaryota"/>
</dbReference>
<dbReference type="GeneTree" id="ENSGT00940000158293"/>
<dbReference type="HOGENOM" id="CLU_028813_1_0_1"/>
<dbReference type="InParanoid" id="B9EJA2"/>
<dbReference type="OMA" id="MCPVEAL"/>
<dbReference type="OrthoDB" id="6021133at2759"/>
<dbReference type="PhylomeDB" id="B9EJA2"/>
<dbReference type="TreeFam" id="TF325130"/>
<dbReference type="BioGRID-ORCS" id="30785">
    <property type="hits" value="1 hit in 77 CRISPR screens"/>
</dbReference>
<dbReference type="CD-CODE" id="CE726F99">
    <property type="entry name" value="Postsynaptic density"/>
</dbReference>
<dbReference type="ChiTaRS" id="Cttnbp2">
    <property type="organism name" value="mouse"/>
</dbReference>
<dbReference type="PRO" id="PR:B9EJA2"/>
<dbReference type="Proteomes" id="UP000000589">
    <property type="component" value="Chromosome 6"/>
</dbReference>
<dbReference type="RNAct" id="B9EJA2">
    <property type="molecule type" value="protein"/>
</dbReference>
<dbReference type="Bgee" id="ENSMUSG00000000416">
    <property type="expression patterns" value="Expressed in caudate-putamen and 193 other cell types or tissues"/>
</dbReference>
<dbReference type="ExpressionAtlas" id="B9EJA2">
    <property type="expression patterns" value="baseline and differential"/>
</dbReference>
<dbReference type="GO" id="GO:0005938">
    <property type="term" value="C:cell cortex"/>
    <property type="evidence" value="ECO:0007669"/>
    <property type="project" value="UniProtKB-SubCell"/>
</dbReference>
<dbReference type="GO" id="GO:0043197">
    <property type="term" value="C:dendritic spine"/>
    <property type="evidence" value="ECO:0000314"/>
    <property type="project" value="UniProtKB"/>
</dbReference>
<dbReference type="GO" id="GO:0090443">
    <property type="term" value="C:FAR/SIN/STRIPAK complex"/>
    <property type="evidence" value="ECO:0000314"/>
    <property type="project" value="UniProtKB"/>
</dbReference>
<dbReference type="GO" id="GO:0098978">
    <property type="term" value="C:glutamatergic synapse"/>
    <property type="evidence" value="ECO:0000314"/>
    <property type="project" value="SynGO"/>
</dbReference>
<dbReference type="GO" id="GO:0098871">
    <property type="term" value="C:postsynaptic actin cytoskeleton"/>
    <property type="evidence" value="ECO:0000314"/>
    <property type="project" value="SynGO"/>
</dbReference>
<dbReference type="GO" id="GO:0008021">
    <property type="term" value="C:synaptic vesicle"/>
    <property type="evidence" value="ECO:0007669"/>
    <property type="project" value="Ensembl"/>
</dbReference>
<dbReference type="GO" id="GO:0017124">
    <property type="term" value="F:SH3 domain binding"/>
    <property type="evidence" value="ECO:0007669"/>
    <property type="project" value="Ensembl"/>
</dbReference>
<dbReference type="GO" id="GO:1905274">
    <property type="term" value="P:regulation of modification of postsynaptic actin cytoskeleton"/>
    <property type="evidence" value="ECO:0007669"/>
    <property type="project" value="Ensembl"/>
</dbReference>
<dbReference type="Gene3D" id="1.25.40.20">
    <property type="entry name" value="Ankyrin repeat-containing domain"/>
    <property type="match status" value="1"/>
</dbReference>
<dbReference type="InterPro" id="IPR002110">
    <property type="entry name" value="Ankyrin_rpt"/>
</dbReference>
<dbReference type="InterPro" id="IPR036770">
    <property type="entry name" value="Ankyrin_rpt-contain_sf"/>
</dbReference>
<dbReference type="InterPro" id="IPR019131">
    <property type="entry name" value="Cortactin-binding_p2_N"/>
</dbReference>
<dbReference type="InterPro" id="IPR050889">
    <property type="entry name" value="Dendritic_Spine_Reg/Scaffold"/>
</dbReference>
<dbReference type="PANTHER" id="PTHR24166:SF27">
    <property type="entry name" value="CORTACTIN-BINDING PROTEIN 2"/>
    <property type="match status" value="1"/>
</dbReference>
<dbReference type="PANTHER" id="PTHR24166">
    <property type="entry name" value="ROLLING PEBBLES, ISOFORM B"/>
    <property type="match status" value="1"/>
</dbReference>
<dbReference type="Pfam" id="PF25408">
    <property type="entry name" value="AAA_lid_NAV1"/>
    <property type="match status" value="1"/>
</dbReference>
<dbReference type="Pfam" id="PF12796">
    <property type="entry name" value="Ank_2"/>
    <property type="match status" value="2"/>
</dbReference>
<dbReference type="Pfam" id="PF09727">
    <property type="entry name" value="CortBP2"/>
    <property type="match status" value="1"/>
</dbReference>
<dbReference type="SMART" id="SM00248">
    <property type="entry name" value="ANK"/>
    <property type="match status" value="6"/>
</dbReference>
<dbReference type="SUPFAM" id="SSF48403">
    <property type="entry name" value="Ankyrin repeat"/>
    <property type="match status" value="1"/>
</dbReference>
<dbReference type="PROSITE" id="PS50297">
    <property type="entry name" value="ANK_REP_REGION"/>
    <property type="match status" value="1"/>
</dbReference>
<dbReference type="PROSITE" id="PS50088">
    <property type="entry name" value="ANK_REPEAT"/>
    <property type="match status" value="4"/>
</dbReference>
<name>CTTB2_MOUSE</name>
<evidence type="ECO:0000250" key="1">
    <source>
        <dbReference type="UniProtKB" id="Q2IBD4"/>
    </source>
</evidence>
<evidence type="ECO:0000255" key="2"/>
<evidence type="ECO:0000256" key="3">
    <source>
        <dbReference type="SAM" id="MobiDB-lite"/>
    </source>
</evidence>
<evidence type="ECO:0000269" key="4">
    <source>
    </source>
</evidence>
<evidence type="ECO:0000269" key="5">
    <source>
    </source>
</evidence>
<evidence type="ECO:0000303" key="6">
    <source>
    </source>
</evidence>
<evidence type="ECO:0000303" key="7">
    <source>
    </source>
</evidence>
<evidence type="ECO:0000303" key="8">
    <source>
    </source>
</evidence>
<evidence type="ECO:0000305" key="9"/>
<evidence type="ECO:0007744" key="10">
    <source>
    </source>
</evidence>
<evidence type="ECO:0007744" key="11">
    <source>
    </source>
</evidence>
<reference key="1">
    <citation type="journal article" date="2005" name="Science">
        <title>The transcriptional landscape of the mammalian genome.</title>
        <authorList>
            <person name="Carninci P."/>
            <person name="Kasukawa T."/>
            <person name="Katayama S."/>
            <person name="Gough J."/>
            <person name="Frith M.C."/>
            <person name="Maeda N."/>
            <person name="Oyama R."/>
            <person name="Ravasi T."/>
            <person name="Lenhard B."/>
            <person name="Wells C."/>
            <person name="Kodzius R."/>
            <person name="Shimokawa K."/>
            <person name="Bajic V.B."/>
            <person name="Brenner S.E."/>
            <person name="Batalov S."/>
            <person name="Forrest A.R."/>
            <person name="Zavolan M."/>
            <person name="Davis M.J."/>
            <person name="Wilming L.G."/>
            <person name="Aidinis V."/>
            <person name="Allen J.E."/>
            <person name="Ambesi-Impiombato A."/>
            <person name="Apweiler R."/>
            <person name="Aturaliya R.N."/>
            <person name="Bailey T.L."/>
            <person name="Bansal M."/>
            <person name="Baxter L."/>
            <person name="Beisel K.W."/>
            <person name="Bersano T."/>
            <person name="Bono H."/>
            <person name="Chalk A.M."/>
            <person name="Chiu K.P."/>
            <person name="Choudhary V."/>
            <person name="Christoffels A."/>
            <person name="Clutterbuck D.R."/>
            <person name="Crowe M.L."/>
            <person name="Dalla E."/>
            <person name="Dalrymple B.P."/>
            <person name="de Bono B."/>
            <person name="Della Gatta G."/>
            <person name="di Bernardo D."/>
            <person name="Down T."/>
            <person name="Engstrom P."/>
            <person name="Fagiolini M."/>
            <person name="Faulkner G."/>
            <person name="Fletcher C.F."/>
            <person name="Fukushima T."/>
            <person name="Furuno M."/>
            <person name="Futaki S."/>
            <person name="Gariboldi M."/>
            <person name="Georgii-Hemming P."/>
            <person name="Gingeras T.R."/>
            <person name="Gojobori T."/>
            <person name="Green R.E."/>
            <person name="Gustincich S."/>
            <person name="Harbers M."/>
            <person name="Hayashi Y."/>
            <person name="Hensch T.K."/>
            <person name="Hirokawa N."/>
            <person name="Hill D."/>
            <person name="Huminiecki L."/>
            <person name="Iacono M."/>
            <person name="Ikeo K."/>
            <person name="Iwama A."/>
            <person name="Ishikawa T."/>
            <person name="Jakt M."/>
            <person name="Kanapin A."/>
            <person name="Katoh M."/>
            <person name="Kawasawa Y."/>
            <person name="Kelso J."/>
            <person name="Kitamura H."/>
            <person name="Kitano H."/>
            <person name="Kollias G."/>
            <person name="Krishnan S.P."/>
            <person name="Kruger A."/>
            <person name="Kummerfeld S.K."/>
            <person name="Kurochkin I.V."/>
            <person name="Lareau L.F."/>
            <person name="Lazarevic D."/>
            <person name="Lipovich L."/>
            <person name="Liu J."/>
            <person name="Liuni S."/>
            <person name="McWilliam S."/>
            <person name="Madan Babu M."/>
            <person name="Madera M."/>
            <person name="Marchionni L."/>
            <person name="Matsuda H."/>
            <person name="Matsuzawa S."/>
            <person name="Miki H."/>
            <person name="Mignone F."/>
            <person name="Miyake S."/>
            <person name="Morris K."/>
            <person name="Mottagui-Tabar S."/>
            <person name="Mulder N."/>
            <person name="Nakano N."/>
            <person name="Nakauchi H."/>
            <person name="Ng P."/>
            <person name="Nilsson R."/>
            <person name="Nishiguchi S."/>
            <person name="Nishikawa S."/>
            <person name="Nori F."/>
            <person name="Ohara O."/>
            <person name="Okazaki Y."/>
            <person name="Orlando V."/>
            <person name="Pang K.C."/>
            <person name="Pavan W.J."/>
            <person name="Pavesi G."/>
            <person name="Pesole G."/>
            <person name="Petrovsky N."/>
            <person name="Piazza S."/>
            <person name="Reed J."/>
            <person name="Reid J.F."/>
            <person name="Ring B.Z."/>
            <person name="Ringwald M."/>
            <person name="Rost B."/>
            <person name="Ruan Y."/>
            <person name="Salzberg S.L."/>
            <person name="Sandelin A."/>
            <person name="Schneider C."/>
            <person name="Schoenbach C."/>
            <person name="Sekiguchi K."/>
            <person name="Semple C.A."/>
            <person name="Seno S."/>
            <person name="Sessa L."/>
            <person name="Sheng Y."/>
            <person name="Shibata Y."/>
            <person name="Shimada H."/>
            <person name="Shimada K."/>
            <person name="Silva D."/>
            <person name="Sinclair B."/>
            <person name="Sperling S."/>
            <person name="Stupka E."/>
            <person name="Sugiura K."/>
            <person name="Sultana R."/>
            <person name="Takenaka Y."/>
            <person name="Taki K."/>
            <person name="Tammoja K."/>
            <person name="Tan S.L."/>
            <person name="Tang S."/>
            <person name="Taylor M.S."/>
            <person name="Tegner J."/>
            <person name="Teichmann S.A."/>
            <person name="Ueda H.R."/>
            <person name="van Nimwegen E."/>
            <person name="Verardo R."/>
            <person name="Wei C.L."/>
            <person name="Yagi K."/>
            <person name="Yamanishi H."/>
            <person name="Zabarovsky E."/>
            <person name="Zhu S."/>
            <person name="Zimmer A."/>
            <person name="Hide W."/>
            <person name="Bult C."/>
            <person name="Grimmond S.M."/>
            <person name="Teasdale R.D."/>
            <person name="Liu E.T."/>
            <person name="Brusic V."/>
            <person name="Quackenbush J."/>
            <person name="Wahlestedt C."/>
            <person name="Mattick J.S."/>
            <person name="Hume D.A."/>
            <person name="Kai C."/>
            <person name="Sasaki D."/>
            <person name="Tomaru Y."/>
            <person name="Fukuda S."/>
            <person name="Kanamori-Katayama M."/>
            <person name="Suzuki M."/>
            <person name="Aoki J."/>
            <person name="Arakawa T."/>
            <person name="Iida J."/>
            <person name="Imamura K."/>
            <person name="Itoh M."/>
            <person name="Kato T."/>
            <person name="Kawaji H."/>
            <person name="Kawagashira N."/>
            <person name="Kawashima T."/>
            <person name="Kojima M."/>
            <person name="Kondo S."/>
            <person name="Konno H."/>
            <person name="Nakano K."/>
            <person name="Ninomiya N."/>
            <person name="Nishio T."/>
            <person name="Okada M."/>
            <person name="Plessy C."/>
            <person name="Shibata K."/>
            <person name="Shiraki T."/>
            <person name="Suzuki S."/>
            <person name="Tagami M."/>
            <person name="Waki K."/>
            <person name="Watahiki A."/>
            <person name="Okamura-Oho Y."/>
            <person name="Suzuki H."/>
            <person name="Kawai J."/>
            <person name="Hayashizaki Y."/>
        </authorList>
    </citation>
    <scope>NUCLEOTIDE SEQUENCE [LARGE SCALE MRNA] (ISOFORM 3)</scope>
    <scope>NUCLEOTIDE SEQUENCE [LARGE SCALE MRNA] OF 470-1648 (ISOFORM 5)</scope>
    <source>
        <strain>C57BL/6J</strain>
        <tissue>Olfactory bulb</tissue>
        <tissue>Skin</tissue>
    </source>
</reference>
<reference key="2">
    <citation type="journal article" date="2009" name="PLoS Biol.">
        <title>Lineage-specific biology revealed by a finished genome assembly of the mouse.</title>
        <authorList>
            <person name="Church D.M."/>
            <person name="Goodstadt L."/>
            <person name="Hillier L.W."/>
            <person name="Zody M.C."/>
            <person name="Goldstein S."/>
            <person name="She X."/>
            <person name="Bult C.J."/>
            <person name="Agarwala R."/>
            <person name="Cherry J.L."/>
            <person name="DiCuccio M."/>
            <person name="Hlavina W."/>
            <person name="Kapustin Y."/>
            <person name="Meric P."/>
            <person name="Maglott D."/>
            <person name="Birtle Z."/>
            <person name="Marques A.C."/>
            <person name="Graves T."/>
            <person name="Zhou S."/>
            <person name="Teague B."/>
            <person name="Potamousis K."/>
            <person name="Churas C."/>
            <person name="Place M."/>
            <person name="Herschleb J."/>
            <person name="Runnheim R."/>
            <person name="Forrest D."/>
            <person name="Amos-Landgraf J."/>
            <person name="Schwartz D.C."/>
            <person name="Cheng Z."/>
            <person name="Lindblad-Toh K."/>
            <person name="Eichler E.E."/>
            <person name="Ponting C.P."/>
        </authorList>
    </citation>
    <scope>NUCLEOTIDE SEQUENCE [LARGE SCALE GENOMIC DNA]</scope>
    <source>
        <strain>C57BL/6J</strain>
    </source>
</reference>
<reference key="3">
    <citation type="submission" date="2005-09" db="EMBL/GenBank/DDBJ databases">
        <authorList>
            <person name="Mural R.J."/>
            <person name="Adams M.D."/>
            <person name="Myers E.W."/>
            <person name="Smith H.O."/>
            <person name="Venter J.C."/>
        </authorList>
    </citation>
    <scope>NUCLEOTIDE SEQUENCE [LARGE SCALE GENOMIC DNA]</scope>
</reference>
<reference key="4">
    <citation type="journal article" date="2004" name="Genome Res.">
        <title>The status, quality, and expansion of the NIH full-length cDNA project: the Mammalian Gene Collection (MGC).</title>
        <authorList>
            <consortium name="The MGC Project Team"/>
        </authorList>
    </citation>
    <scope>NUCLEOTIDE SEQUENCE [LARGE SCALE MRNA] (ISOFORMS 1 AND 2)</scope>
    <source>
        <strain>C57BL/6J</strain>
        <tissue>Brain</tissue>
    </source>
</reference>
<reference key="5">
    <citation type="journal article" date="2004" name="DNA Res.">
        <title>Prediction of the coding sequences of mouse homologues of KIAA gene: IV. The complete nucleotide sequences of 500 mouse KIAA-homologous cDNAs identified by screening of terminal sequences of cDNA clones randomly sampled from size-fractionated libraries.</title>
        <authorList>
            <person name="Okazaki N."/>
            <person name="Kikuno R."/>
            <person name="Ohara R."/>
            <person name="Inamoto S."/>
            <person name="Koseki H."/>
            <person name="Hiraoka S."/>
            <person name="Saga Y."/>
            <person name="Seino S."/>
            <person name="Nishimura M."/>
            <person name="Kaisho T."/>
            <person name="Hoshino K."/>
            <person name="Kitamura H."/>
            <person name="Nagase T."/>
            <person name="Ohara O."/>
            <person name="Koga H."/>
        </authorList>
    </citation>
    <scope>NUCLEOTIDE SEQUENCE [LARGE SCALE MRNA] OF 3-1648 (ISOFORM 4)</scope>
    <source>
        <tissue>Pancreas islet cell</tissue>
    </source>
</reference>
<reference key="6">
    <citation type="journal article" date="2010" name="Cell">
        <title>A tissue-specific atlas of mouse protein phosphorylation and expression.</title>
        <authorList>
            <person name="Huttlin E.L."/>
            <person name="Jedrychowski M.P."/>
            <person name="Elias J.E."/>
            <person name="Goswami T."/>
            <person name="Rad R."/>
            <person name="Beausoleil S.A."/>
            <person name="Villen J."/>
            <person name="Haas W."/>
            <person name="Sowa M.E."/>
            <person name="Gygi S.P."/>
        </authorList>
    </citation>
    <scope>PHOSPHORYLATION [LARGE SCALE ANALYSIS] AT SER-1510</scope>
    <scope>IDENTIFICATION BY MASS SPECTROMETRY [LARGE SCALE ANALYSIS]</scope>
    <source>
        <tissue>Brain</tissue>
        <tissue>Kidney</tissue>
        <tissue>Lung</tissue>
    </source>
</reference>
<reference key="7">
    <citation type="journal article" date="2012" name="J. Neurosci.">
        <title>Cortactin-binding protein 2 modulates the mobility of cortactin and regulates dendritic spine formation and maintenance.</title>
        <authorList>
            <person name="Chen Y.K."/>
            <person name="Hsueh Y.P."/>
        </authorList>
    </citation>
    <scope>INTERACTION WITH CTTN</scope>
    <scope>SUBCELLULAR LOCATION</scope>
    <scope>TISSUE SPECIFICITY</scope>
    <scope>MUTAGENESIS OF PRO-540; PRO-543; PRO-599 AND PRO-602</scope>
</reference>
<reference key="8">
    <citation type="journal article" date="2012" name="Mol. Biol. Cell">
        <title>CTTNBP2, but not CTTNBP2NL, regulates dendritic spinogenesis and synaptic distribution of the striatin-PP2A complex.</title>
        <authorList>
            <person name="Chen Y.K."/>
            <person name="Chen C.Y."/>
            <person name="Hu H.T."/>
            <person name="Hsueh Y.P."/>
        </authorList>
    </citation>
    <scope>FUNCTION</scope>
    <scope>SUBCELLULAR LOCATION</scope>
    <scope>TISSUE SPECIFICITY</scope>
</reference>
<reference key="9">
    <citation type="journal article" date="2014" name="Mol. Cell. Proteomics">
        <title>Immunoaffinity enrichment and mass spectrometry analysis of protein methylation.</title>
        <authorList>
            <person name="Guo A."/>
            <person name="Gu H."/>
            <person name="Zhou J."/>
            <person name="Mulhern D."/>
            <person name="Wang Y."/>
            <person name="Lee K.A."/>
            <person name="Yang V."/>
            <person name="Aguiar M."/>
            <person name="Kornhauser J."/>
            <person name="Jia X."/>
            <person name="Ren J."/>
            <person name="Beausoleil S.A."/>
            <person name="Silva J.C."/>
            <person name="Vemulapalli V."/>
            <person name="Bedford M.T."/>
            <person name="Comb M.J."/>
        </authorList>
    </citation>
    <scope>METHYLATION [LARGE SCALE ANALYSIS] AT ARG-495</scope>
    <scope>IDENTIFICATION BY MASS SPECTROMETRY [LARGE SCALE ANALYSIS]</scope>
    <source>
        <tissue>Brain</tissue>
        <tissue>Embryo</tissue>
    </source>
</reference>